<sequence>MTAEISAQYWAFAIFIISAIILCVLILTLSFLLGERKHIKVYSRDLPFESGINPVGNPKLHLSAKFYLIAIFFVLFDIEAFYLYAWSSVIREAGWLGFYEAIIFVSVLLSGLVYLVRIGALKWTPNHS</sequence>
<name>NUOA_BAUCH</name>
<comment type="function">
    <text evidence="1">NDH-1 shuttles electrons from NADH, via FMN and iron-sulfur (Fe-S) centers, to quinones in the respiratory chain. The immediate electron acceptor for the enzyme in this species is believed to be ubiquinone. Couples the redox reaction to proton translocation (for every two electrons transferred, four hydrogen ions are translocated across the cytoplasmic membrane), and thus conserves the redox energy in a proton gradient.</text>
</comment>
<comment type="catalytic activity">
    <reaction evidence="1">
        <text>a quinone + NADH + 5 H(+)(in) = a quinol + NAD(+) + 4 H(+)(out)</text>
        <dbReference type="Rhea" id="RHEA:57888"/>
        <dbReference type="ChEBI" id="CHEBI:15378"/>
        <dbReference type="ChEBI" id="CHEBI:24646"/>
        <dbReference type="ChEBI" id="CHEBI:57540"/>
        <dbReference type="ChEBI" id="CHEBI:57945"/>
        <dbReference type="ChEBI" id="CHEBI:132124"/>
    </reaction>
</comment>
<comment type="subunit">
    <text evidence="1">NDH-1 is composed of 14 different subunits. Subunits NuoA, H, J, K, L, M, N constitute the membrane sector of the complex.</text>
</comment>
<comment type="subcellular location">
    <subcellularLocation>
        <location evidence="1">Cell membrane</location>
        <topology evidence="1">Multi-pass membrane protein</topology>
    </subcellularLocation>
</comment>
<comment type="similarity">
    <text evidence="1">Belongs to the complex I subunit 3 family.</text>
</comment>
<keyword id="KW-1003">Cell membrane</keyword>
<keyword id="KW-0472">Membrane</keyword>
<keyword id="KW-0520">NAD</keyword>
<keyword id="KW-0874">Quinone</keyword>
<keyword id="KW-1185">Reference proteome</keyword>
<keyword id="KW-1278">Translocase</keyword>
<keyword id="KW-0812">Transmembrane</keyword>
<keyword id="KW-1133">Transmembrane helix</keyword>
<keyword id="KW-0813">Transport</keyword>
<keyword id="KW-0830">Ubiquinone</keyword>
<accession>Q1LT89</accession>
<organism>
    <name type="scientific">Baumannia cicadellinicola subsp. Homalodisca coagulata</name>
    <dbReference type="NCBI Taxonomy" id="374463"/>
    <lineage>
        <taxon>Bacteria</taxon>
        <taxon>Pseudomonadati</taxon>
        <taxon>Pseudomonadota</taxon>
        <taxon>Gammaproteobacteria</taxon>
        <taxon>Candidatus Palibaumannia</taxon>
    </lineage>
</organism>
<proteinExistence type="inferred from homology"/>
<dbReference type="EC" id="7.1.1.-" evidence="1"/>
<dbReference type="EMBL" id="CP000238">
    <property type="protein sequence ID" value="ABF14283.1"/>
    <property type="molecule type" value="Genomic_DNA"/>
</dbReference>
<dbReference type="RefSeq" id="WP_011520558.1">
    <property type="nucleotide sequence ID" value="NC_007984.1"/>
</dbReference>
<dbReference type="SMR" id="Q1LT89"/>
<dbReference type="STRING" id="374463.BCI_0381"/>
<dbReference type="KEGG" id="bci:BCI_0381"/>
<dbReference type="HOGENOM" id="CLU_119549_2_1_6"/>
<dbReference type="OrthoDB" id="9791970at2"/>
<dbReference type="Proteomes" id="UP000002427">
    <property type="component" value="Chromosome"/>
</dbReference>
<dbReference type="GO" id="GO:0030964">
    <property type="term" value="C:NADH dehydrogenase complex"/>
    <property type="evidence" value="ECO:0007669"/>
    <property type="project" value="TreeGrafter"/>
</dbReference>
<dbReference type="GO" id="GO:0005886">
    <property type="term" value="C:plasma membrane"/>
    <property type="evidence" value="ECO:0007669"/>
    <property type="project" value="UniProtKB-SubCell"/>
</dbReference>
<dbReference type="GO" id="GO:0008137">
    <property type="term" value="F:NADH dehydrogenase (ubiquinone) activity"/>
    <property type="evidence" value="ECO:0007669"/>
    <property type="project" value="InterPro"/>
</dbReference>
<dbReference type="GO" id="GO:0050136">
    <property type="term" value="F:NADH:ubiquinone reductase (non-electrogenic) activity"/>
    <property type="evidence" value="ECO:0007669"/>
    <property type="project" value="UniProtKB-UniRule"/>
</dbReference>
<dbReference type="GO" id="GO:0048038">
    <property type="term" value="F:quinone binding"/>
    <property type="evidence" value="ECO:0007669"/>
    <property type="project" value="UniProtKB-KW"/>
</dbReference>
<dbReference type="Gene3D" id="1.20.58.1610">
    <property type="entry name" value="NADH:ubiquinone/plastoquinone oxidoreductase, chain 3"/>
    <property type="match status" value="1"/>
</dbReference>
<dbReference type="HAMAP" id="MF_01394">
    <property type="entry name" value="NDH1_NuoA"/>
    <property type="match status" value="1"/>
</dbReference>
<dbReference type="InterPro" id="IPR023043">
    <property type="entry name" value="NAD(P)H_OxRDtase_bac/plastid"/>
</dbReference>
<dbReference type="InterPro" id="IPR000440">
    <property type="entry name" value="NADH_UbQ/plastoQ_OxRdtase_su3"/>
</dbReference>
<dbReference type="InterPro" id="IPR038430">
    <property type="entry name" value="NDAH_ubi_oxred_su3_sf"/>
</dbReference>
<dbReference type="PANTHER" id="PTHR11058:SF21">
    <property type="entry name" value="NADH-QUINONE OXIDOREDUCTASE SUBUNIT A"/>
    <property type="match status" value="1"/>
</dbReference>
<dbReference type="PANTHER" id="PTHR11058">
    <property type="entry name" value="NADH-UBIQUINONE OXIDOREDUCTASE CHAIN 3"/>
    <property type="match status" value="1"/>
</dbReference>
<dbReference type="Pfam" id="PF00507">
    <property type="entry name" value="Oxidored_q4"/>
    <property type="match status" value="1"/>
</dbReference>
<gene>
    <name evidence="1" type="primary">nuoA</name>
    <name type="ordered locus">BCI_0381</name>
</gene>
<feature type="chain" id="PRO_0000362630" description="NADH-quinone oxidoreductase subunit A">
    <location>
        <begin position="1"/>
        <end position="128"/>
    </location>
</feature>
<feature type="transmembrane region" description="Helical" evidence="1">
    <location>
        <begin position="12"/>
        <end position="32"/>
    </location>
</feature>
<feature type="transmembrane region" description="Helical" evidence="1">
    <location>
        <begin position="66"/>
        <end position="86"/>
    </location>
</feature>
<feature type="transmembrane region" description="Helical" evidence="1">
    <location>
        <begin position="96"/>
        <end position="116"/>
    </location>
</feature>
<reference key="1">
    <citation type="journal article" date="2006" name="PLoS Biol.">
        <title>Metabolic complementarity and genomics of the dual bacterial symbiosis of sharpshooters.</title>
        <authorList>
            <person name="Wu D."/>
            <person name="Daugherty S.C."/>
            <person name="Van Aken S.E."/>
            <person name="Pai G.H."/>
            <person name="Watkins K.L."/>
            <person name="Khouri H."/>
            <person name="Tallon L.J."/>
            <person name="Zaborsky J.M."/>
            <person name="Dunbar H.E."/>
            <person name="Tran P.L."/>
            <person name="Moran N.A."/>
            <person name="Eisen J.A."/>
        </authorList>
    </citation>
    <scope>NUCLEOTIDE SEQUENCE [LARGE SCALE GENOMIC DNA]</scope>
</reference>
<evidence type="ECO:0000255" key="1">
    <source>
        <dbReference type="HAMAP-Rule" id="MF_01394"/>
    </source>
</evidence>
<protein>
    <recommendedName>
        <fullName evidence="1">NADH-quinone oxidoreductase subunit A</fullName>
        <ecNumber evidence="1">7.1.1.-</ecNumber>
    </recommendedName>
    <alternativeName>
        <fullName evidence="1">NADH dehydrogenase I subunit A</fullName>
    </alternativeName>
    <alternativeName>
        <fullName evidence="1">NDH-1 subunit A</fullName>
    </alternativeName>
    <alternativeName>
        <fullName evidence="1">NUO1</fullName>
    </alternativeName>
</protein>